<dbReference type="EMBL" id="CU468135">
    <property type="protein sequence ID" value="CAO97403.1"/>
    <property type="molecule type" value="Genomic_DNA"/>
</dbReference>
<dbReference type="RefSeq" id="WP_012442072.1">
    <property type="nucleotide sequence ID" value="NC_010694.1"/>
</dbReference>
<dbReference type="SMR" id="B2VBJ9"/>
<dbReference type="STRING" id="465817.ETA_23570"/>
<dbReference type="KEGG" id="eta:ETA_23570"/>
<dbReference type="eggNOG" id="COG2921">
    <property type="taxonomic scope" value="Bacteria"/>
</dbReference>
<dbReference type="HOGENOM" id="CLU_161438_2_1_6"/>
<dbReference type="OrthoDB" id="9793424at2"/>
<dbReference type="Proteomes" id="UP000001726">
    <property type="component" value="Chromosome"/>
</dbReference>
<dbReference type="GO" id="GO:0005829">
    <property type="term" value="C:cytosol"/>
    <property type="evidence" value="ECO:0007669"/>
    <property type="project" value="TreeGrafter"/>
</dbReference>
<dbReference type="FunFam" id="3.30.70.260:FF:000002">
    <property type="entry name" value="UPF0250 protein YbeD"/>
    <property type="match status" value="1"/>
</dbReference>
<dbReference type="Gene3D" id="3.30.70.260">
    <property type="match status" value="1"/>
</dbReference>
<dbReference type="HAMAP" id="MF_00659">
    <property type="entry name" value="UPF0250"/>
    <property type="match status" value="1"/>
</dbReference>
<dbReference type="InterPro" id="IPR007454">
    <property type="entry name" value="UPF0250_YbeD-like"/>
</dbReference>
<dbReference type="InterPro" id="IPR027471">
    <property type="entry name" value="YbeD-like_sf"/>
</dbReference>
<dbReference type="NCBIfam" id="NF003447">
    <property type="entry name" value="PRK04998.1"/>
    <property type="match status" value="1"/>
</dbReference>
<dbReference type="PANTHER" id="PTHR38036">
    <property type="entry name" value="UPF0250 PROTEIN YBED"/>
    <property type="match status" value="1"/>
</dbReference>
<dbReference type="PANTHER" id="PTHR38036:SF1">
    <property type="entry name" value="UPF0250 PROTEIN YBED"/>
    <property type="match status" value="1"/>
</dbReference>
<dbReference type="Pfam" id="PF04359">
    <property type="entry name" value="DUF493"/>
    <property type="match status" value="1"/>
</dbReference>
<dbReference type="SUPFAM" id="SSF117991">
    <property type="entry name" value="YbeD/HP0495-like"/>
    <property type="match status" value="1"/>
</dbReference>
<reference key="1">
    <citation type="journal article" date="2008" name="Environ. Microbiol.">
        <title>The genome of Erwinia tasmaniensis strain Et1/99, a non-pathogenic bacterium in the genus Erwinia.</title>
        <authorList>
            <person name="Kube M."/>
            <person name="Migdoll A.M."/>
            <person name="Mueller I."/>
            <person name="Kuhl H."/>
            <person name="Beck A."/>
            <person name="Reinhardt R."/>
            <person name="Geider K."/>
        </authorList>
    </citation>
    <scope>NUCLEOTIDE SEQUENCE [LARGE SCALE GENOMIC DNA]</scope>
    <source>
        <strain>DSM 17950 / CFBP 7177 / CIP 109463 / NCPPB 4357 / Et1/99</strain>
    </source>
</reference>
<comment type="similarity">
    <text evidence="1">Belongs to the UPF0250 family.</text>
</comment>
<protein>
    <recommendedName>
        <fullName evidence="1">UPF0250 protein ETA_23570</fullName>
    </recommendedName>
</protein>
<gene>
    <name type="ordered locus">ETA_23570</name>
</gene>
<evidence type="ECO:0000255" key="1">
    <source>
        <dbReference type="HAMAP-Rule" id="MF_00659"/>
    </source>
</evidence>
<organism>
    <name type="scientific">Erwinia tasmaniensis (strain DSM 17950 / CFBP 7177 / CIP 109463 / NCPPB 4357 / Et1/99)</name>
    <dbReference type="NCBI Taxonomy" id="465817"/>
    <lineage>
        <taxon>Bacteria</taxon>
        <taxon>Pseudomonadati</taxon>
        <taxon>Pseudomonadota</taxon>
        <taxon>Gammaproteobacteria</taxon>
        <taxon>Enterobacterales</taxon>
        <taxon>Erwiniaceae</taxon>
        <taxon>Erwinia</taxon>
    </lineage>
</organism>
<sequence>MKTNLKELLEFPTSFTYKVMGLAQPELVDQVVEVVQRHAPGDYSPEVKPSSKGNYHSVSITINATHIEQVETLYEELGNIEIVRMVL</sequence>
<keyword id="KW-1185">Reference proteome</keyword>
<accession>B2VBJ9</accession>
<feature type="chain" id="PRO_1000131246" description="UPF0250 protein ETA_23570">
    <location>
        <begin position="1"/>
        <end position="87"/>
    </location>
</feature>
<proteinExistence type="inferred from homology"/>
<name>Y2357_ERWT9</name>